<proteinExistence type="inferred from homology"/>
<feature type="chain" id="PRO_0000398169" description="Large ribosomal subunit protein eL39z">
    <location>
        <begin position="1"/>
        <end position="51"/>
    </location>
</feature>
<sequence length="51" mass="6513">MPSHKTFRIKKKLAKKMRQNRPIPYWIRMRTDNTIRYNAKRRHWRRTKLGF</sequence>
<name>RL391_ORYSJ</name>
<gene>
    <name type="primary">RPL39A</name>
    <name evidence="3" type="ordered locus">Os02g0797200</name>
    <name evidence="2" type="ORF">OJ1004_E04.27</name>
    <name evidence="4" type="ORF">OsJ_08727</name>
</gene>
<evidence type="ECO:0000305" key="1"/>
<evidence type="ECO:0000312" key="2">
    <source>
        <dbReference type="EMBL" id="BAD19088.1"/>
    </source>
</evidence>
<evidence type="ECO:0000312" key="3">
    <source>
        <dbReference type="EMBL" id="BAS81373.1"/>
    </source>
</evidence>
<evidence type="ECO:0000312" key="4">
    <source>
        <dbReference type="EMBL" id="EAZ24946.1"/>
    </source>
</evidence>
<keyword id="KW-1185">Reference proteome</keyword>
<keyword id="KW-0687">Ribonucleoprotein</keyword>
<keyword id="KW-0689">Ribosomal protein</keyword>
<comment type="similarity">
    <text evidence="1">Belongs to the eukaryotic ribosomal protein eL39 family.</text>
</comment>
<comment type="sequence caution" evidence="1">
    <conflict type="erroneous gene model prediction">
        <sequence resource="EMBL-CDS" id="BAD19088"/>
    </conflict>
</comment>
<comment type="sequence caution" evidence="1">
    <conflict type="erroneous gene model prediction">
        <sequence resource="EMBL-CDS" id="BAF10306"/>
    </conflict>
</comment>
<comment type="sequence caution" evidence="1">
    <conflict type="frameshift">
        <sequence resource="EMBL" id="D29725"/>
    </conflict>
</comment>
<protein>
    <recommendedName>
        <fullName evidence="1">Large ribosomal subunit protein eL39z</fullName>
    </recommendedName>
    <alternativeName>
        <fullName>60S ribosomal protein L39-1</fullName>
    </alternativeName>
</protein>
<dbReference type="EMBL" id="D29725">
    <property type="status" value="NOT_ANNOTATED_CDS"/>
    <property type="molecule type" value="mRNA"/>
</dbReference>
<dbReference type="EMBL" id="AP003975">
    <property type="protein sequence ID" value="BAD19088.1"/>
    <property type="status" value="ALT_SEQ"/>
    <property type="molecule type" value="Genomic_DNA"/>
</dbReference>
<dbReference type="EMBL" id="AP008208">
    <property type="protein sequence ID" value="BAF10306.1"/>
    <property type="status" value="ALT_SEQ"/>
    <property type="molecule type" value="Genomic_DNA"/>
</dbReference>
<dbReference type="EMBL" id="AP014958">
    <property type="protein sequence ID" value="BAS81373.1"/>
    <property type="molecule type" value="Genomic_DNA"/>
</dbReference>
<dbReference type="EMBL" id="CM000139">
    <property type="protein sequence ID" value="EAZ24946.1"/>
    <property type="molecule type" value="Genomic_DNA"/>
</dbReference>
<dbReference type="EMBL" id="AK120800">
    <property type="protein sequence ID" value="BAH00179.1"/>
    <property type="molecule type" value="mRNA"/>
</dbReference>
<dbReference type="EMBL" id="AK243036">
    <property type="protein sequence ID" value="BAH01416.1"/>
    <property type="molecule type" value="mRNA"/>
</dbReference>
<dbReference type="RefSeq" id="XP_015622685.1">
    <property type="nucleotide sequence ID" value="XM_015767199.1"/>
</dbReference>
<dbReference type="RefSeq" id="XP_015622686.1">
    <property type="nucleotide sequence ID" value="XM_015767200.1"/>
</dbReference>
<dbReference type="RefSeq" id="XP_015622687.1">
    <property type="nucleotide sequence ID" value="XM_015767201.1"/>
</dbReference>
<dbReference type="SMR" id="Q6KAJ8"/>
<dbReference type="FunCoup" id="Q6KAJ8">
    <property type="interactions" value="1218"/>
</dbReference>
<dbReference type="STRING" id="39947.Q6KAJ8"/>
<dbReference type="PaxDb" id="39947-Q6KAJ8"/>
<dbReference type="EnsemblPlants" id="Os02t0797200-01">
    <property type="protein sequence ID" value="Os02t0797200-01"/>
    <property type="gene ID" value="Os02g0797200"/>
</dbReference>
<dbReference type="Gramene" id="Os02t0797200-01">
    <property type="protein sequence ID" value="Os02t0797200-01"/>
    <property type="gene ID" value="Os02g0797200"/>
</dbReference>
<dbReference type="KEGG" id="dosa:Os02g0796900"/>
<dbReference type="eggNOG" id="KOG0002">
    <property type="taxonomic scope" value="Eukaryota"/>
</dbReference>
<dbReference type="HOGENOM" id="CLU_181948_1_2_1"/>
<dbReference type="InParanoid" id="Q6KAJ8"/>
<dbReference type="OMA" id="RRTKMNI"/>
<dbReference type="OrthoDB" id="274627at2759"/>
<dbReference type="Proteomes" id="UP000000763">
    <property type="component" value="Chromosome 2"/>
</dbReference>
<dbReference type="Proteomes" id="UP000007752">
    <property type="component" value="Chromosome 2"/>
</dbReference>
<dbReference type="Proteomes" id="UP000059680">
    <property type="component" value="Chromosome 2"/>
</dbReference>
<dbReference type="ExpressionAtlas" id="Q6KAJ8">
    <property type="expression patterns" value="baseline and differential"/>
</dbReference>
<dbReference type="GO" id="GO:1990904">
    <property type="term" value="C:ribonucleoprotein complex"/>
    <property type="evidence" value="ECO:0007669"/>
    <property type="project" value="UniProtKB-KW"/>
</dbReference>
<dbReference type="GO" id="GO:0005840">
    <property type="term" value="C:ribosome"/>
    <property type="evidence" value="ECO:0007669"/>
    <property type="project" value="UniProtKB-KW"/>
</dbReference>
<dbReference type="GO" id="GO:0003735">
    <property type="term" value="F:structural constituent of ribosome"/>
    <property type="evidence" value="ECO:0007669"/>
    <property type="project" value="InterPro"/>
</dbReference>
<dbReference type="GO" id="GO:0006412">
    <property type="term" value="P:translation"/>
    <property type="evidence" value="ECO:0007669"/>
    <property type="project" value="InterPro"/>
</dbReference>
<dbReference type="FunFam" id="1.10.1620.10:FF:000001">
    <property type="entry name" value="60S ribosomal protein-like L39"/>
    <property type="match status" value="1"/>
</dbReference>
<dbReference type="Gene3D" id="1.10.1620.10">
    <property type="entry name" value="Ribosomal protein L39e"/>
    <property type="match status" value="1"/>
</dbReference>
<dbReference type="HAMAP" id="MF_00629">
    <property type="entry name" value="Ribosomal_eL39"/>
    <property type="match status" value="1"/>
</dbReference>
<dbReference type="InterPro" id="IPR000077">
    <property type="entry name" value="Ribosomal_eL39"/>
</dbReference>
<dbReference type="InterPro" id="IPR020083">
    <property type="entry name" value="Ribosomal_eL39_CS"/>
</dbReference>
<dbReference type="InterPro" id="IPR023626">
    <property type="entry name" value="Ribosomal_eL39_dom_sf"/>
</dbReference>
<dbReference type="PANTHER" id="PTHR19970:SF0">
    <property type="entry name" value="LARGE RIBOSOMAL SUBUNIT PROTEIN EL39"/>
    <property type="match status" value="1"/>
</dbReference>
<dbReference type="PANTHER" id="PTHR19970">
    <property type="entry name" value="RIBOSOMAL PROTEIN L39E"/>
    <property type="match status" value="1"/>
</dbReference>
<dbReference type="Pfam" id="PF00832">
    <property type="entry name" value="Ribosomal_L39"/>
    <property type="match status" value="1"/>
</dbReference>
<dbReference type="SUPFAM" id="SSF48662">
    <property type="entry name" value="Ribosomal protein L39e"/>
    <property type="match status" value="1"/>
</dbReference>
<dbReference type="PROSITE" id="PS00051">
    <property type="entry name" value="RIBOSOMAL_L39E"/>
    <property type="match status" value="1"/>
</dbReference>
<organism>
    <name type="scientific">Oryza sativa subsp. japonica</name>
    <name type="common">Rice</name>
    <dbReference type="NCBI Taxonomy" id="39947"/>
    <lineage>
        <taxon>Eukaryota</taxon>
        <taxon>Viridiplantae</taxon>
        <taxon>Streptophyta</taxon>
        <taxon>Embryophyta</taxon>
        <taxon>Tracheophyta</taxon>
        <taxon>Spermatophyta</taxon>
        <taxon>Magnoliopsida</taxon>
        <taxon>Liliopsida</taxon>
        <taxon>Poales</taxon>
        <taxon>Poaceae</taxon>
        <taxon>BOP clade</taxon>
        <taxon>Oryzoideae</taxon>
        <taxon>Oryzeae</taxon>
        <taxon>Oryzinae</taxon>
        <taxon>Oryza</taxon>
        <taxon>Oryza sativa</taxon>
    </lineage>
</organism>
<accession>Q6KAJ8</accession>
<accession>A0A0P0VQS4</accession>
<accession>Q0DWT0</accession>
<accession>Q0DWT2</accession>
<reference key="1">
    <citation type="submission" date="1994-03" db="EMBL/GenBank/DDBJ databases">
        <title>Random sequencing of cDNA library from rice anthers at the uninucleate microspore stage.</title>
        <authorList>
            <person name="Hihara Y."/>
            <person name="Umeda M."/>
            <person name="Hara C."/>
            <person name="Liu Q."/>
            <person name="Aotsuka S."/>
            <person name="Toriyama K."/>
            <person name="Uchimiya H."/>
        </authorList>
    </citation>
    <scope>NUCLEOTIDE SEQUENCE [MRNA]</scope>
    <source>
        <tissue>Anther</tissue>
    </source>
</reference>
<reference key="2">
    <citation type="journal article" date="2005" name="Nature">
        <title>The map-based sequence of the rice genome.</title>
        <authorList>
            <consortium name="International rice genome sequencing project (IRGSP)"/>
        </authorList>
    </citation>
    <scope>NUCLEOTIDE SEQUENCE [LARGE SCALE GENOMIC DNA]</scope>
    <source>
        <strain>cv. Nipponbare</strain>
    </source>
</reference>
<reference key="3">
    <citation type="journal article" date="2008" name="Nucleic Acids Res.">
        <title>The rice annotation project database (RAP-DB): 2008 update.</title>
        <authorList>
            <consortium name="The rice annotation project (RAP)"/>
        </authorList>
    </citation>
    <scope>GENOME REANNOTATION</scope>
    <source>
        <strain>cv. Nipponbare</strain>
    </source>
</reference>
<reference key="4">
    <citation type="journal article" date="2013" name="Rice">
        <title>Improvement of the Oryza sativa Nipponbare reference genome using next generation sequence and optical map data.</title>
        <authorList>
            <person name="Kawahara Y."/>
            <person name="de la Bastide M."/>
            <person name="Hamilton J.P."/>
            <person name="Kanamori H."/>
            <person name="McCombie W.R."/>
            <person name="Ouyang S."/>
            <person name="Schwartz D.C."/>
            <person name="Tanaka T."/>
            <person name="Wu J."/>
            <person name="Zhou S."/>
            <person name="Childs K.L."/>
            <person name="Davidson R.M."/>
            <person name="Lin H."/>
            <person name="Quesada-Ocampo L."/>
            <person name="Vaillancourt B."/>
            <person name="Sakai H."/>
            <person name="Lee S.S."/>
            <person name="Kim J."/>
            <person name="Numa H."/>
            <person name="Itoh T."/>
            <person name="Buell C.R."/>
            <person name="Matsumoto T."/>
        </authorList>
    </citation>
    <scope>GENOME REANNOTATION</scope>
    <source>
        <strain>cv. Nipponbare</strain>
    </source>
</reference>
<reference key="5">
    <citation type="journal article" date="2005" name="PLoS Biol.">
        <title>The genomes of Oryza sativa: a history of duplications.</title>
        <authorList>
            <person name="Yu J."/>
            <person name="Wang J."/>
            <person name="Lin W."/>
            <person name="Li S."/>
            <person name="Li H."/>
            <person name="Zhou J."/>
            <person name="Ni P."/>
            <person name="Dong W."/>
            <person name="Hu S."/>
            <person name="Zeng C."/>
            <person name="Zhang J."/>
            <person name="Zhang Y."/>
            <person name="Li R."/>
            <person name="Xu Z."/>
            <person name="Li S."/>
            <person name="Li X."/>
            <person name="Zheng H."/>
            <person name="Cong L."/>
            <person name="Lin L."/>
            <person name="Yin J."/>
            <person name="Geng J."/>
            <person name="Li G."/>
            <person name="Shi J."/>
            <person name="Liu J."/>
            <person name="Lv H."/>
            <person name="Li J."/>
            <person name="Wang J."/>
            <person name="Deng Y."/>
            <person name="Ran L."/>
            <person name="Shi X."/>
            <person name="Wang X."/>
            <person name="Wu Q."/>
            <person name="Li C."/>
            <person name="Ren X."/>
            <person name="Wang J."/>
            <person name="Wang X."/>
            <person name="Li D."/>
            <person name="Liu D."/>
            <person name="Zhang X."/>
            <person name="Ji Z."/>
            <person name="Zhao W."/>
            <person name="Sun Y."/>
            <person name="Zhang Z."/>
            <person name="Bao J."/>
            <person name="Han Y."/>
            <person name="Dong L."/>
            <person name="Ji J."/>
            <person name="Chen P."/>
            <person name="Wu S."/>
            <person name="Liu J."/>
            <person name="Xiao Y."/>
            <person name="Bu D."/>
            <person name="Tan J."/>
            <person name="Yang L."/>
            <person name="Ye C."/>
            <person name="Zhang J."/>
            <person name="Xu J."/>
            <person name="Zhou Y."/>
            <person name="Yu Y."/>
            <person name="Zhang B."/>
            <person name="Zhuang S."/>
            <person name="Wei H."/>
            <person name="Liu B."/>
            <person name="Lei M."/>
            <person name="Yu H."/>
            <person name="Li Y."/>
            <person name="Xu H."/>
            <person name="Wei S."/>
            <person name="He X."/>
            <person name="Fang L."/>
            <person name="Zhang Z."/>
            <person name="Zhang Y."/>
            <person name="Huang X."/>
            <person name="Su Z."/>
            <person name="Tong W."/>
            <person name="Li J."/>
            <person name="Tong Z."/>
            <person name="Li S."/>
            <person name="Ye J."/>
            <person name="Wang L."/>
            <person name="Fang L."/>
            <person name="Lei T."/>
            <person name="Chen C.-S."/>
            <person name="Chen H.-C."/>
            <person name="Xu Z."/>
            <person name="Li H."/>
            <person name="Huang H."/>
            <person name="Zhang F."/>
            <person name="Xu H."/>
            <person name="Li N."/>
            <person name="Zhao C."/>
            <person name="Li S."/>
            <person name="Dong L."/>
            <person name="Huang Y."/>
            <person name="Li L."/>
            <person name="Xi Y."/>
            <person name="Qi Q."/>
            <person name="Li W."/>
            <person name="Zhang B."/>
            <person name="Hu W."/>
            <person name="Zhang Y."/>
            <person name="Tian X."/>
            <person name="Jiao Y."/>
            <person name="Liang X."/>
            <person name="Jin J."/>
            <person name="Gao L."/>
            <person name="Zheng W."/>
            <person name="Hao B."/>
            <person name="Liu S.-M."/>
            <person name="Wang W."/>
            <person name="Yuan L."/>
            <person name="Cao M."/>
            <person name="McDermott J."/>
            <person name="Samudrala R."/>
            <person name="Wang J."/>
            <person name="Wong G.K.-S."/>
            <person name="Yang H."/>
        </authorList>
    </citation>
    <scope>NUCLEOTIDE SEQUENCE [LARGE SCALE GENOMIC DNA]</scope>
    <source>
        <strain>cv. Nipponbare</strain>
    </source>
</reference>
<reference key="6">
    <citation type="journal article" date="2003" name="Science">
        <title>Collection, mapping, and annotation of over 28,000 cDNA clones from japonica rice.</title>
        <authorList>
            <consortium name="The rice full-length cDNA consortium"/>
        </authorList>
    </citation>
    <scope>NUCLEOTIDE SEQUENCE [LARGE SCALE MRNA]</scope>
    <source>
        <strain>cv. Nipponbare</strain>
    </source>
</reference>
<reference key="7">
    <citation type="submission" date="2006-10" db="EMBL/GenBank/DDBJ databases">
        <title>Oryza sativa full length cDNA.</title>
        <authorList>
            <consortium name="The rice full-length cDNA consortium"/>
        </authorList>
    </citation>
    <scope>NUCLEOTIDE SEQUENCE [LARGE SCALE MRNA]</scope>
    <source>
        <strain>cv. Nipponbare</strain>
    </source>
</reference>